<accession>Q5F363</accession>
<feature type="chain" id="PRO_0000391907" description="Protein Jumonji">
    <location>
        <begin position="1"/>
        <end position="1233"/>
    </location>
</feature>
<feature type="domain" description="JmjN" evidence="4">
    <location>
        <begin position="546"/>
        <end position="587"/>
    </location>
</feature>
<feature type="domain" description="ARID" evidence="3">
    <location>
        <begin position="610"/>
        <end position="702"/>
    </location>
</feature>
<feature type="domain" description="JmjC" evidence="5">
    <location>
        <begin position="873"/>
        <end position="1037"/>
    </location>
</feature>
<feature type="region of interest" description="Disordered" evidence="6">
    <location>
        <begin position="1"/>
        <end position="22"/>
    </location>
</feature>
<feature type="region of interest" description="Disordered" evidence="6">
    <location>
        <begin position="65"/>
        <end position="148"/>
    </location>
</feature>
<feature type="region of interest" description="Sufficient for interaction with the PRC2 complex" evidence="2">
    <location>
        <begin position="139"/>
        <end position="168"/>
    </location>
</feature>
<feature type="region of interest" description="Disordered" evidence="6">
    <location>
        <begin position="165"/>
        <end position="335"/>
    </location>
</feature>
<feature type="region of interest" description="Disordered" evidence="6">
    <location>
        <begin position="355"/>
        <end position="379"/>
    </location>
</feature>
<feature type="region of interest" description="Disordered" evidence="6">
    <location>
        <begin position="423"/>
        <end position="451"/>
    </location>
</feature>
<feature type="region of interest" description="Disordered" evidence="6">
    <location>
        <begin position="466"/>
        <end position="542"/>
    </location>
</feature>
<feature type="region of interest" description="Disordered" evidence="6">
    <location>
        <begin position="1197"/>
        <end position="1233"/>
    </location>
</feature>
<feature type="short sequence motif" description="Nuclear localization signal" evidence="2">
    <location>
        <begin position="102"/>
        <end position="108"/>
    </location>
</feature>
<feature type="short sequence motif" description="GSGFP motif" evidence="2">
    <location>
        <begin position="863"/>
        <end position="867"/>
    </location>
</feature>
<feature type="compositionally biased region" description="Basic residues" evidence="6">
    <location>
        <begin position="1"/>
        <end position="10"/>
    </location>
</feature>
<feature type="compositionally biased region" description="Low complexity" evidence="6">
    <location>
        <begin position="84"/>
        <end position="96"/>
    </location>
</feature>
<feature type="compositionally biased region" description="Polar residues" evidence="6">
    <location>
        <begin position="115"/>
        <end position="127"/>
    </location>
</feature>
<feature type="compositionally biased region" description="Acidic residues" evidence="6">
    <location>
        <begin position="178"/>
        <end position="191"/>
    </location>
</feature>
<feature type="compositionally biased region" description="Polar residues" evidence="6">
    <location>
        <begin position="195"/>
        <end position="208"/>
    </location>
</feature>
<feature type="compositionally biased region" description="Polar residues" evidence="6">
    <location>
        <begin position="216"/>
        <end position="228"/>
    </location>
</feature>
<feature type="compositionally biased region" description="Basic and acidic residues" evidence="6">
    <location>
        <begin position="229"/>
        <end position="262"/>
    </location>
</feature>
<feature type="compositionally biased region" description="Polar residues" evidence="6">
    <location>
        <begin position="268"/>
        <end position="285"/>
    </location>
</feature>
<feature type="compositionally biased region" description="Low complexity" evidence="6">
    <location>
        <begin position="309"/>
        <end position="318"/>
    </location>
</feature>
<feature type="compositionally biased region" description="Polar residues" evidence="6">
    <location>
        <begin position="365"/>
        <end position="379"/>
    </location>
</feature>
<feature type="compositionally biased region" description="Basic and acidic residues" evidence="6">
    <location>
        <begin position="423"/>
        <end position="440"/>
    </location>
</feature>
<feature type="compositionally biased region" description="Basic and acidic residues" evidence="6">
    <location>
        <begin position="473"/>
        <end position="485"/>
    </location>
</feature>
<feature type="compositionally biased region" description="Polar residues" evidence="6">
    <location>
        <begin position="506"/>
        <end position="519"/>
    </location>
</feature>
<feature type="compositionally biased region" description="Basic and acidic residues" evidence="6">
    <location>
        <begin position="520"/>
        <end position="535"/>
    </location>
</feature>
<feature type="compositionally biased region" description="Low complexity" evidence="6">
    <location>
        <begin position="1219"/>
        <end position="1233"/>
    </location>
</feature>
<name>JARD2_CHICK</name>
<keyword id="KW-0156">Chromatin regulator</keyword>
<keyword id="KW-0217">Developmental protein</keyword>
<keyword id="KW-0221">Differentiation</keyword>
<keyword id="KW-0539">Nucleus</keyword>
<keyword id="KW-1185">Reference proteome</keyword>
<keyword id="KW-0678">Repressor</keyword>
<keyword id="KW-0804">Transcription</keyword>
<keyword id="KW-0805">Transcription regulation</keyword>
<protein>
    <recommendedName>
        <fullName>Protein Jumonji</fullName>
    </recommendedName>
    <alternativeName>
        <fullName>Jumonji/ARID domain-containing protein 2</fullName>
    </alternativeName>
</protein>
<proteinExistence type="evidence at transcript level"/>
<gene>
    <name type="primary">JARID2</name>
    <name type="synonym">JMJ</name>
    <name type="ORF">RCJMB04_32g20</name>
</gene>
<sequence length="1233" mass="138110">MSKERPKRNIIQKEYDDSDGIPWSEERVVRKVLYLSLKEFKNAQKRQHGDGISGSLKAVNGLLTNGQSKGLESEQLENEKDDASQVSSTSNDISSSDFEEGPSRKRPRLQAQRKFAQSQPNSPSTTPIKIVEPLLPPPATQISDLSKRKPKTEDFLTFLCLRGSPALPSNMVYFGSSQDDEDEEEEEEETEDTKTATNNASSSCQSTPRKGKTHKQVPNGQVFNGSSKSLKEKEPAQKHKSKEATPGKEKNSEHKAESRKDQAAANHHPTTNTGSSTKGLTANNHHTLHRSAQDLRKQVSKVNGITRMSSPSANAASAKKMRDVRPSPSKTVKYTATVTKGTVTYTKAKKELVKETKLNHHKPSSPVNHTISGKLESSNAKTRKQVLSLGASKSNNTAVNGVKVNGKLNQKTCTKEVGRQLREGLRNSKRRLEETNHIDKIQSPTKRMKGAVNLAEAASKKAVVEKPLLNGHLKKEVPEKNLERNRPKRATAGKSTPGKQAHGKTENASCENRSTSQAESLHKPQDSMGKHEKGSSKSGWGMLGEIPILRPSTKEFHDPLIYIESVRAQVEKYGMCRVIPPPDWRPECKLNDEMRFVTQIQHIHKLGRRWGPNVQRLACIKKHLKSQGITMDELPLIGGCELDLACFVQLINEMGGMQQVTDLKKWNKLADMLRIPKTAQDRLAKLQEAYCQYLLSYDSLSPEEHKKLEKEVLLEKEILEKRKGPLEGHSENAYKFHSLPRFEPKNGLINGVVHKNGFRNKLKEVDVPLKTGRRRLFAQEKETTKDDEEEEEEGVLSDLHKCIYKGRSVSLTTFYRTARNIMNMCFTKEPTVAEVEQEYWRLVEQKDSHVAVHCGKVDTNTHGSGFPVGKSEPFSRHGWNLTVLPNNTGSILRHLGAVPGVTIPWLNIGMVFSTSCWSRDQNHLPYIDYLHTGADCIWYCIPAAEENKLDDVVHTLLQANGTPGLEMLESNVMISPEILCKEGIRVHRTVQQSGQFVVCFPGSFVSKVCCGYSVSETVHFATTQWTSMGFKTAKEMKRRRIAKPFSMEKLLYQIATAEAKKENGPTLSTISSLLGELRDTELRQRRQLYEAGLHSSARYGSHDSSSTAMDGKKKPRKWLQLETSERRCQICQHLCYLSMVVQENENVVFCLECALRHVEKQKSCRGLKMMYRYDEEQIISLVNQICGKVSGKNGSIENCISKPTPKRGPRKRATVDVPSSRLSSSSSSKSASS</sequence>
<comment type="function">
    <text evidence="1 2">Regulator of histone methyltransferase complexes that plays an essential role in embryonic development, including heart and liver development, neural tube fusion process and hematopoiesis. Acts as an accessory subunit for the core PRC2 (Polycomb repressive complex 2) complex, which mediates histone H3K27 (H3K27me3) trimethylation on chromatin. Binds DNA and mediates the recruitment of the PRC2 complex to target genes in embryonic stem cells, thereby playing a key role in stem cell differentiation and normal embryonic development (By similarity). In cardiac cells, it is required to repress expression of cyclin-D1 (CCND1) by activating methylation of 'Lys-9' of histone H3 (H3K9me) by the GLP1/EHMT1 and G9a/EHMT2 histone methyltransferases. Also acts as a transcriptional repressor of ANF via its interaction with GATA4 and NKX2-5. Participates in the negative regulation of cell proliferation signaling. Does not have histone demethylase activity (By similarity).</text>
</comment>
<comment type="subunit">
    <text evidence="2">Associates with the PRC2 complex.</text>
</comment>
<comment type="subcellular location">
    <subcellularLocation>
        <location>Nucleus</location>
    </subcellularLocation>
    <text evidence="2">Colocalizes with the PRC2 complex on chromatin.</text>
</comment>
<comment type="domain">
    <text evidence="2">The ARID domain is required to target the PRC2 complex to its target genes.</text>
</comment>
<comment type="similarity">
    <text evidence="7">Belongs to the JARID2 family.</text>
</comment>
<reference key="1">
    <citation type="journal article" date="2005" name="Genome Biol.">
        <title>Full-length cDNAs from chicken bursal lymphocytes to facilitate gene function analysis.</title>
        <authorList>
            <person name="Caldwell R.B."/>
            <person name="Kierzek A.M."/>
            <person name="Arakawa H."/>
            <person name="Bezzubov Y."/>
            <person name="Zaim J."/>
            <person name="Fiedler P."/>
            <person name="Kutter S."/>
            <person name="Blagodatski A."/>
            <person name="Kostovska D."/>
            <person name="Koter M."/>
            <person name="Plachy J."/>
            <person name="Carninci P."/>
            <person name="Hayashizaki Y."/>
            <person name="Buerstedde J.-M."/>
        </authorList>
    </citation>
    <scope>NUCLEOTIDE SEQUENCE [LARGE SCALE MRNA]</scope>
    <source>
        <strain>CB</strain>
        <tissue>Bursa of Fabricius</tissue>
    </source>
</reference>
<organism>
    <name type="scientific">Gallus gallus</name>
    <name type="common">Chicken</name>
    <dbReference type="NCBI Taxonomy" id="9031"/>
    <lineage>
        <taxon>Eukaryota</taxon>
        <taxon>Metazoa</taxon>
        <taxon>Chordata</taxon>
        <taxon>Craniata</taxon>
        <taxon>Vertebrata</taxon>
        <taxon>Euteleostomi</taxon>
        <taxon>Archelosauria</taxon>
        <taxon>Archosauria</taxon>
        <taxon>Dinosauria</taxon>
        <taxon>Saurischia</taxon>
        <taxon>Theropoda</taxon>
        <taxon>Coelurosauria</taxon>
        <taxon>Aves</taxon>
        <taxon>Neognathae</taxon>
        <taxon>Galloanserae</taxon>
        <taxon>Galliformes</taxon>
        <taxon>Phasianidae</taxon>
        <taxon>Phasianinae</taxon>
        <taxon>Gallus</taxon>
    </lineage>
</organism>
<dbReference type="EMBL" id="AJ851787">
    <property type="protein sequence ID" value="CAH65421.1"/>
    <property type="molecule type" value="mRNA"/>
</dbReference>
<dbReference type="RefSeq" id="NP_001012880.1">
    <property type="nucleotide sequence ID" value="NM_001012862.1"/>
</dbReference>
<dbReference type="SMR" id="Q5F363"/>
<dbReference type="FunCoup" id="Q5F363">
    <property type="interactions" value="1789"/>
</dbReference>
<dbReference type="STRING" id="9031.ENSGALP00000020711"/>
<dbReference type="GlyGen" id="Q5F363">
    <property type="glycosylation" value="1 site"/>
</dbReference>
<dbReference type="PaxDb" id="9031-ENSGALP00000020711"/>
<dbReference type="GeneID" id="420839"/>
<dbReference type="KEGG" id="gga:420839"/>
<dbReference type="CTD" id="3720"/>
<dbReference type="VEuPathDB" id="HostDB:geneid_420839"/>
<dbReference type="eggNOG" id="KOG1246">
    <property type="taxonomic scope" value="Eukaryota"/>
</dbReference>
<dbReference type="InParanoid" id="Q5F363"/>
<dbReference type="OrthoDB" id="8951118at2759"/>
<dbReference type="PhylomeDB" id="Q5F363"/>
<dbReference type="PRO" id="PR:Q5F363"/>
<dbReference type="Proteomes" id="UP000000539">
    <property type="component" value="Unassembled WGS sequence"/>
</dbReference>
<dbReference type="GO" id="GO:0000785">
    <property type="term" value="C:chromatin"/>
    <property type="evidence" value="ECO:0000318"/>
    <property type="project" value="GO_Central"/>
</dbReference>
<dbReference type="GO" id="GO:0035098">
    <property type="term" value="C:ESC/E(Z) complex"/>
    <property type="evidence" value="ECO:0000250"/>
    <property type="project" value="UniProtKB"/>
</dbReference>
<dbReference type="GO" id="GO:0035097">
    <property type="term" value="C:histone methyltransferase complex"/>
    <property type="evidence" value="ECO:0000250"/>
    <property type="project" value="UniProtKB"/>
</dbReference>
<dbReference type="GO" id="GO:0005634">
    <property type="term" value="C:nucleus"/>
    <property type="evidence" value="ECO:0000318"/>
    <property type="project" value="GO_Central"/>
</dbReference>
<dbReference type="GO" id="GO:0003682">
    <property type="term" value="F:chromatin binding"/>
    <property type="evidence" value="ECO:0000250"/>
    <property type="project" value="UniProtKB"/>
</dbReference>
<dbReference type="GO" id="GO:0003677">
    <property type="term" value="F:DNA binding"/>
    <property type="evidence" value="ECO:0007669"/>
    <property type="project" value="InterPro"/>
</dbReference>
<dbReference type="GO" id="GO:0006338">
    <property type="term" value="P:chromatin remodeling"/>
    <property type="evidence" value="ECO:0000318"/>
    <property type="project" value="GO_Central"/>
</dbReference>
<dbReference type="GO" id="GO:0010468">
    <property type="term" value="P:regulation of gene expression"/>
    <property type="evidence" value="ECO:0000318"/>
    <property type="project" value="GO_Central"/>
</dbReference>
<dbReference type="GO" id="GO:0048863">
    <property type="term" value="P:stem cell differentiation"/>
    <property type="evidence" value="ECO:0000250"/>
    <property type="project" value="UniProtKB"/>
</dbReference>
<dbReference type="CDD" id="cd16870">
    <property type="entry name" value="ARID_JARD2"/>
    <property type="match status" value="1"/>
</dbReference>
<dbReference type="FunFam" id="2.60.120.650:FF:000007">
    <property type="entry name" value="Jumonji, AT rich interactive domain 2"/>
    <property type="match status" value="1"/>
</dbReference>
<dbReference type="FunFam" id="1.10.150.60:FF:000005">
    <property type="entry name" value="Jumonji, AT-rich interactive domain 2a"/>
    <property type="match status" value="1"/>
</dbReference>
<dbReference type="Gene3D" id="1.10.150.60">
    <property type="entry name" value="ARID DNA-binding domain"/>
    <property type="match status" value="1"/>
</dbReference>
<dbReference type="Gene3D" id="2.60.120.650">
    <property type="entry name" value="Cupin"/>
    <property type="match status" value="1"/>
</dbReference>
<dbReference type="InterPro" id="IPR001606">
    <property type="entry name" value="ARID_dom"/>
</dbReference>
<dbReference type="InterPro" id="IPR036431">
    <property type="entry name" value="ARID_dom_sf"/>
</dbReference>
<dbReference type="InterPro" id="IPR003347">
    <property type="entry name" value="JmjC_dom"/>
</dbReference>
<dbReference type="InterPro" id="IPR003349">
    <property type="entry name" value="JmjN"/>
</dbReference>
<dbReference type="InterPro" id="IPR004198">
    <property type="entry name" value="Znf_C5HC2"/>
</dbReference>
<dbReference type="PANTHER" id="PTHR10694">
    <property type="entry name" value="LYSINE-SPECIFIC DEMETHYLASE"/>
    <property type="match status" value="1"/>
</dbReference>
<dbReference type="PANTHER" id="PTHR10694:SF113">
    <property type="entry name" value="PROTEIN JUMONJI"/>
    <property type="match status" value="1"/>
</dbReference>
<dbReference type="Pfam" id="PF01388">
    <property type="entry name" value="ARID"/>
    <property type="match status" value="1"/>
</dbReference>
<dbReference type="Pfam" id="PF02373">
    <property type="entry name" value="JmjC"/>
    <property type="match status" value="1"/>
</dbReference>
<dbReference type="Pfam" id="PF02375">
    <property type="entry name" value="JmjN"/>
    <property type="match status" value="1"/>
</dbReference>
<dbReference type="Pfam" id="PF02928">
    <property type="entry name" value="zf-C5HC2"/>
    <property type="match status" value="1"/>
</dbReference>
<dbReference type="SMART" id="SM01014">
    <property type="entry name" value="ARID"/>
    <property type="match status" value="1"/>
</dbReference>
<dbReference type="SMART" id="SM00501">
    <property type="entry name" value="BRIGHT"/>
    <property type="match status" value="1"/>
</dbReference>
<dbReference type="SMART" id="SM00558">
    <property type="entry name" value="JmjC"/>
    <property type="match status" value="1"/>
</dbReference>
<dbReference type="SMART" id="SM00545">
    <property type="entry name" value="JmjN"/>
    <property type="match status" value="1"/>
</dbReference>
<dbReference type="SUPFAM" id="SSF46774">
    <property type="entry name" value="ARID-like"/>
    <property type="match status" value="1"/>
</dbReference>
<dbReference type="SUPFAM" id="SSF51197">
    <property type="entry name" value="Clavaminate synthase-like"/>
    <property type="match status" value="1"/>
</dbReference>
<dbReference type="PROSITE" id="PS51011">
    <property type="entry name" value="ARID"/>
    <property type="match status" value="1"/>
</dbReference>
<dbReference type="PROSITE" id="PS51184">
    <property type="entry name" value="JMJC"/>
    <property type="match status" value="1"/>
</dbReference>
<dbReference type="PROSITE" id="PS51183">
    <property type="entry name" value="JMJN"/>
    <property type="match status" value="1"/>
</dbReference>
<evidence type="ECO:0000250" key="1">
    <source>
        <dbReference type="UniProtKB" id="Q62315"/>
    </source>
</evidence>
<evidence type="ECO:0000250" key="2">
    <source>
        <dbReference type="UniProtKB" id="Q92833"/>
    </source>
</evidence>
<evidence type="ECO:0000255" key="3">
    <source>
        <dbReference type="PROSITE-ProRule" id="PRU00355"/>
    </source>
</evidence>
<evidence type="ECO:0000255" key="4">
    <source>
        <dbReference type="PROSITE-ProRule" id="PRU00537"/>
    </source>
</evidence>
<evidence type="ECO:0000255" key="5">
    <source>
        <dbReference type="PROSITE-ProRule" id="PRU00538"/>
    </source>
</evidence>
<evidence type="ECO:0000256" key="6">
    <source>
        <dbReference type="SAM" id="MobiDB-lite"/>
    </source>
</evidence>
<evidence type="ECO:0000305" key="7"/>